<proteinExistence type="predicted"/>
<organism>
    <name type="scientific">Bacillus subtilis (strain 168)</name>
    <dbReference type="NCBI Taxonomy" id="224308"/>
    <lineage>
        <taxon>Bacteria</taxon>
        <taxon>Bacillati</taxon>
        <taxon>Bacillota</taxon>
        <taxon>Bacilli</taxon>
        <taxon>Bacillales</taxon>
        <taxon>Bacillaceae</taxon>
        <taxon>Bacillus</taxon>
    </lineage>
</organism>
<feature type="chain" id="PRO_0000360732" description="Uncharacterized protein YceG">
    <location>
        <begin position="1"/>
        <end position="537"/>
    </location>
</feature>
<reference key="1">
    <citation type="journal article" date="1997" name="Microbiology">
        <title>A 32 kb nucleotide sequence from the region of the lincomycin-resistance gene (22 degrees-25 degrees) of the Bacillus subtilis chromosome and identification of the site of the lin-2 mutation.</title>
        <authorList>
            <person name="Kumano M."/>
            <person name="Tamakoshi A."/>
            <person name="Yamane K."/>
        </authorList>
    </citation>
    <scope>NUCLEOTIDE SEQUENCE [GENOMIC DNA]</scope>
    <source>
        <strain>168</strain>
    </source>
</reference>
<reference key="2">
    <citation type="journal article" date="1997" name="Nature">
        <title>The complete genome sequence of the Gram-positive bacterium Bacillus subtilis.</title>
        <authorList>
            <person name="Kunst F."/>
            <person name="Ogasawara N."/>
            <person name="Moszer I."/>
            <person name="Albertini A.M."/>
            <person name="Alloni G."/>
            <person name="Azevedo V."/>
            <person name="Bertero M.G."/>
            <person name="Bessieres P."/>
            <person name="Bolotin A."/>
            <person name="Borchert S."/>
            <person name="Borriss R."/>
            <person name="Boursier L."/>
            <person name="Brans A."/>
            <person name="Braun M."/>
            <person name="Brignell S.C."/>
            <person name="Bron S."/>
            <person name="Brouillet S."/>
            <person name="Bruschi C.V."/>
            <person name="Caldwell B."/>
            <person name="Capuano V."/>
            <person name="Carter N.M."/>
            <person name="Choi S.-K."/>
            <person name="Codani J.-J."/>
            <person name="Connerton I.F."/>
            <person name="Cummings N.J."/>
            <person name="Daniel R.A."/>
            <person name="Denizot F."/>
            <person name="Devine K.M."/>
            <person name="Duesterhoeft A."/>
            <person name="Ehrlich S.D."/>
            <person name="Emmerson P.T."/>
            <person name="Entian K.-D."/>
            <person name="Errington J."/>
            <person name="Fabret C."/>
            <person name="Ferrari E."/>
            <person name="Foulger D."/>
            <person name="Fritz C."/>
            <person name="Fujita M."/>
            <person name="Fujita Y."/>
            <person name="Fuma S."/>
            <person name="Galizzi A."/>
            <person name="Galleron N."/>
            <person name="Ghim S.-Y."/>
            <person name="Glaser P."/>
            <person name="Goffeau A."/>
            <person name="Golightly E.J."/>
            <person name="Grandi G."/>
            <person name="Guiseppi G."/>
            <person name="Guy B.J."/>
            <person name="Haga K."/>
            <person name="Haiech J."/>
            <person name="Harwood C.R."/>
            <person name="Henaut A."/>
            <person name="Hilbert H."/>
            <person name="Holsappel S."/>
            <person name="Hosono S."/>
            <person name="Hullo M.-F."/>
            <person name="Itaya M."/>
            <person name="Jones L.-M."/>
            <person name="Joris B."/>
            <person name="Karamata D."/>
            <person name="Kasahara Y."/>
            <person name="Klaerr-Blanchard M."/>
            <person name="Klein C."/>
            <person name="Kobayashi Y."/>
            <person name="Koetter P."/>
            <person name="Koningstein G."/>
            <person name="Krogh S."/>
            <person name="Kumano M."/>
            <person name="Kurita K."/>
            <person name="Lapidus A."/>
            <person name="Lardinois S."/>
            <person name="Lauber J."/>
            <person name="Lazarevic V."/>
            <person name="Lee S.-M."/>
            <person name="Levine A."/>
            <person name="Liu H."/>
            <person name="Masuda S."/>
            <person name="Mauel C."/>
            <person name="Medigue C."/>
            <person name="Medina N."/>
            <person name="Mellado R.P."/>
            <person name="Mizuno M."/>
            <person name="Moestl D."/>
            <person name="Nakai S."/>
            <person name="Noback M."/>
            <person name="Noone D."/>
            <person name="O'Reilly M."/>
            <person name="Ogawa K."/>
            <person name="Ogiwara A."/>
            <person name="Oudega B."/>
            <person name="Park S.-H."/>
            <person name="Parro V."/>
            <person name="Pohl T.M."/>
            <person name="Portetelle D."/>
            <person name="Porwollik S."/>
            <person name="Prescott A.M."/>
            <person name="Presecan E."/>
            <person name="Pujic P."/>
            <person name="Purnelle B."/>
            <person name="Rapoport G."/>
            <person name="Rey M."/>
            <person name="Reynolds S."/>
            <person name="Rieger M."/>
            <person name="Rivolta C."/>
            <person name="Rocha E."/>
            <person name="Roche B."/>
            <person name="Rose M."/>
            <person name="Sadaie Y."/>
            <person name="Sato T."/>
            <person name="Scanlan E."/>
            <person name="Schleich S."/>
            <person name="Schroeter R."/>
            <person name="Scoffone F."/>
            <person name="Sekiguchi J."/>
            <person name="Sekowska A."/>
            <person name="Seror S.J."/>
            <person name="Serror P."/>
            <person name="Shin B.-S."/>
            <person name="Soldo B."/>
            <person name="Sorokin A."/>
            <person name="Tacconi E."/>
            <person name="Takagi T."/>
            <person name="Takahashi H."/>
            <person name="Takemaru K."/>
            <person name="Takeuchi M."/>
            <person name="Tamakoshi A."/>
            <person name="Tanaka T."/>
            <person name="Terpstra P."/>
            <person name="Tognoni A."/>
            <person name="Tosato V."/>
            <person name="Uchiyama S."/>
            <person name="Vandenbol M."/>
            <person name="Vannier F."/>
            <person name="Vassarotti A."/>
            <person name="Viari A."/>
            <person name="Wambutt R."/>
            <person name="Wedler E."/>
            <person name="Wedler H."/>
            <person name="Weitzenegger T."/>
            <person name="Winters P."/>
            <person name="Wipat A."/>
            <person name="Yamamoto H."/>
            <person name="Yamane K."/>
            <person name="Yasumoto K."/>
            <person name="Yata K."/>
            <person name="Yoshida K."/>
            <person name="Yoshikawa H.-F."/>
            <person name="Zumstein E."/>
            <person name="Yoshikawa H."/>
            <person name="Danchin A."/>
        </authorList>
    </citation>
    <scope>NUCLEOTIDE SEQUENCE [LARGE SCALE GENOMIC DNA]</scope>
    <source>
        <strain>168</strain>
    </source>
</reference>
<gene>
    <name type="primary">yceG</name>
    <name type="ordered locus">BSU02930</name>
</gene>
<keyword id="KW-1185">Reference proteome</keyword>
<accession>O34809</accession>
<accession>Q797R3</accession>
<dbReference type="EMBL" id="AB000617">
    <property type="protein sequence ID" value="BAA22254.1"/>
    <property type="molecule type" value="Genomic_DNA"/>
</dbReference>
<dbReference type="EMBL" id="AL009126">
    <property type="protein sequence ID" value="CAB12087.1"/>
    <property type="molecule type" value="Genomic_DNA"/>
</dbReference>
<dbReference type="PIR" id="A69757">
    <property type="entry name" value="A69757"/>
</dbReference>
<dbReference type="RefSeq" id="NP_388175.1">
    <property type="nucleotide sequence ID" value="NC_000964.3"/>
</dbReference>
<dbReference type="RefSeq" id="WP_003246317.1">
    <property type="nucleotide sequence ID" value="NZ_OZ025638.1"/>
</dbReference>
<dbReference type="FunCoup" id="O34809">
    <property type="interactions" value="9"/>
</dbReference>
<dbReference type="STRING" id="224308.BSU02930"/>
<dbReference type="PaxDb" id="224308-BSU02930"/>
<dbReference type="EnsemblBacteria" id="CAB12087">
    <property type="protein sequence ID" value="CAB12087"/>
    <property type="gene ID" value="BSU_02930"/>
</dbReference>
<dbReference type="GeneID" id="938361"/>
<dbReference type="KEGG" id="bsu:BSU02930"/>
<dbReference type="PATRIC" id="fig|224308.179.peg.305"/>
<dbReference type="eggNOG" id="ENOG502Z9CR">
    <property type="taxonomic scope" value="Bacteria"/>
</dbReference>
<dbReference type="InParanoid" id="O34809"/>
<dbReference type="OrthoDB" id="2421008at2"/>
<dbReference type="PhylomeDB" id="O34809"/>
<dbReference type="BioCyc" id="BSUB:BSU02930-MONOMER"/>
<dbReference type="Proteomes" id="UP000001570">
    <property type="component" value="Chromosome"/>
</dbReference>
<dbReference type="InterPro" id="IPR025647">
    <property type="entry name" value="YceG_bac"/>
</dbReference>
<dbReference type="Pfam" id="PF14266">
    <property type="entry name" value="YceG_bac"/>
    <property type="match status" value="2"/>
</dbReference>
<name>YCEG_BACSU</name>
<sequence>MRQEELTIHKALPADGDWKSLLFQPLPERDHYETAQGLSFSRLAGQILGTPIDETDYYNELYELSVNDRITILSETLDKTIEPETFQKLQHIHSINQKEKGLSVSRFVAFLDGEKLIAKHSNPLMHRHLRKALMTLLHTFADSHEKGLNHPDFRRVLLDVSKFSLNHLNPWLEKTDIEREMPKVVWYGDATKSQLYFLYYLMLVGCDVLLFHPAGTDQLALVDPKQELGFTEKLPDVSELQPFPKEKPDRKSTVAYRSTKEIEHVLNHEESMLYKPWQFRDHTPVSVTLKTTYDELFLITKERAFIRPNFKADKHSIEIPNVFAKIMGVSKDNKEYWNRLHTLADYQETEMVRSFPFTEEIKSNYQFHYSHALDQEGNIDPDKLMASNVWQYKQLPAGVQTAIAKTISRMCRYPRLKALHQEQVKDVQIYLFKQTTNLPANLLKLIQMFDYAQTVPKLVLYHTEMSGGLTRSDAAALLFLNEIGIDIIIYNPPGHQDIEQFIEEDQYDIHWLDDMVFQQDYKEPSLVKRLFRTITQK</sequence>
<protein>
    <recommendedName>
        <fullName>Uncharacterized protein YceG</fullName>
    </recommendedName>
</protein>